<reference key="1">
    <citation type="submission" date="2006-08" db="EMBL/GenBank/DDBJ databases">
        <title>Complete sequence of chromosome 2 of Burkholderia cepacia AMMD.</title>
        <authorList>
            <person name="Copeland A."/>
            <person name="Lucas S."/>
            <person name="Lapidus A."/>
            <person name="Barry K."/>
            <person name="Detter J.C."/>
            <person name="Glavina del Rio T."/>
            <person name="Hammon N."/>
            <person name="Israni S."/>
            <person name="Pitluck S."/>
            <person name="Bruce D."/>
            <person name="Chain P."/>
            <person name="Malfatti S."/>
            <person name="Shin M."/>
            <person name="Vergez L."/>
            <person name="Schmutz J."/>
            <person name="Larimer F."/>
            <person name="Land M."/>
            <person name="Hauser L."/>
            <person name="Kyrpides N."/>
            <person name="Kim E."/>
            <person name="Parke J."/>
            <person name="Coenye T."/>
            <person name="Konstantinidis K."/>
            <person name="Ramette A."/>
            <person name="Tiedje J."/>
            <person name="Richardson P."/>
        </authorList>
    </citation>
    <scope>NUCLEOTIDE SEQUENCE [LARGE SCALE GENOMIC DNA]</scope>
    <source>
        <strain>ATCC BAA-244 / DSM 16087 / CCUG 44356 / LMG 19182 / AMMD</strain>
    </source>
</reference>
<comment type="function">
    <text evidence="1">Catalyzes the phosphorolysis of diverse nucleosides, yielding D-ribose 1-phosphate and the respective free bases. Can use uridine, adenosine, guanosine, cytidine, thymidine, inosine and xanthosine as substrates. Also catalyzes the reverse reactions.</text>
</comment>
<comment type="catalytic activity">
    <reaction evidence="1">
        <text>a purine D-ribonucleoside + phosphate = a purine nucleobase + alpha-D-ribose 1-phosphate</text>
        <dbReference type="Rhea" id="RHEA:19805"/>
        <dbReference type="ChEBI" id="CHEBI:26386"/>
        <dbReference type="ChEBI" id="CHEBI:43474"/>
        <dbReference type="ChEBI" id="CHEBI:57720"/>
        <dbReference type="ChEBI" id="CHEBI:142355"/>
        <dbReference type="EC" id="2.4.2.1"/>
    </reaction>
</comment>
<comment type="catalytic activity">
    <reaction evidence="1">
        <text>adenosine + phosphate = alpha-D-ribose 1-phosphate + adenine</text>
        <dbReference type="Rhea" id="RHEA:27642"/>
        <dbReference type="ChEBI" id="CHEBI:16335"/>
        <dbReference type="ChEBI" id="CHEBI:16708"/>
        <dbReference type="ChEBI" id="CHEBI:43474"/>
        <dbReference type="ChEBI" id="CHEBI:57720"/>
        <dbReference type="EC" id="2.4.2.1"/>
    </reaction>
</comment>
<comment type="catalytic activity">
    <reaction evidence="1">
        <text>cytidine + phosphate = cytosine + alpha-D-ribose 1-phosphate</text>
        <dbReference type="Rhea" id="RHEA:52540"/>
        <dbReference type="ChEBI" id="CHEBI:16040"/>
        <dbReference type="ChEBI" id="CHEBI:17562"/>
        <dbReference type="ChEBI" id="CHEBI:43474"/>
        <dbReference type="ChEBI" id="CHEBI:57720"/>
        <dbReference type="EC" id="2.4.2.2"/>
    </reaction>
</comment>
<comment type="catalytic activity">
    <reaction evidence="1">
        <text>guanosine + phosphate = alpha-D-ribose 1-phosphate + guanine</text>
        <dbReference type="Rhea" id="RHEA:13233"/>
        <dbReference type="ChEBI" id="CHEBI:16235"/>
        <dbReference type="ChEBI" id="CHEBI:16750"/>
        <dbReference type="ChEBI" id="CHEBI:43474"/>
        <dbReference type="ChEBI" id="CHEBI:57720"/>
        <dbReference type="EC" id="2.4.2.1"/>
    </reaction>
</comment>
<comment type="catalytic activity">
    <reaction evidence="1">
        <text>inosine + phosphate = alpha-D-ribose 1-phosphate + hypoxanthine</text>
        <dbReference type="Rhea" id="RHEA:27646"/>
        <dbReference type="ChEBI" id="CHEBI:17368"/>
        <dbReference type="ChEBI" id="CHEBI:17596"/>
        <dbReference type="ChEBI" id="CHEBI:43474"/>
        <dbReference type="ChEBI" id="CHEBI:57720"/>
        <dbReference type="EC" id="2.4.2.1"/>
    </reaction>
</comment>
<comment type="catalytic activity">
    <reaction evidence="1">
        <text>thymidine + phosphate = 2-deoxy-alpha-D-ribose 1-phosphate + thymine</text>
        <dbReference type="Rhea" id="RHEA:16037"/>
        <dbReference type="ChEBI" id="CHEBI:17748"/>
        <dbReference type="ChEBI" id="CHEBI:17821"/>
        <dbReference type="ChEBI" id="CHEBI:43474"/>
        <dbReference type="ChEBI" id="CHEBI:57259"/>
        <dbReference type="EC" id="2.4.2.2"/>
    </reaction>
</comment>
<comment type="catalytic activity">
    <reaction evidence="1">
        <text>uridine + phosphate = alpha-D-ribose 1-phosphate + uracil</text>
        <dbReference type="Rhea" id="RHEA:24388"/>
        <dbReference type="ChEBI" id="CHEBI:16704"/>
        <dbReference type="ChEBI" id="CHEBI:17568"/>
        <dbReference type="ChEBI" id="CHEBI:43474"/>
        <dbReference type="ChEBI" id="CHEBI:57720"/>
        <dbReference type="EC" id="2.4.2.2"/>
    </reaction>
</comment>
<comment type="catalytic activity">
    <reaction evidence="1">
        <text>xanthosine + phosphate = alpha-D-ribose 1-phosphate + xanthine</text>
        <dbReference type="Rhea" id="RHEA:27638"/>
        <dbReference type="ChEBI" id="CHEBI:17712"/>
        <dbReference type="ChEBI" id="CHEBI:18107"/>
        <dbReference type="ChEBI" id="CHEBI:43474"/>
        <dbReference type="ChEBI" id="CHEBI:57720"/>
        <dbReference type="EC" id="2.4.2.1"/>
    </reaction>
</comment>
<comment type="similarity">
    <text evidence="1">Belongs to the nucleoside phosphorylase PpnP family.</text>
</comment>
<sequence>MTSATQFDNVSVVKRANVYFDGKCVSHTVLFPEGTRKTLGVILPCALNFGTDAPELMEVQAGKCRVKLDGSSEWQTYGAGESFSVPGKSRFDIEVLETLDYVCSYL</sequence>
<feature type="chain" id="PRO_0000292784" description="Pyrimidine/purine nucleoside phosphorylase">
    <location>
        <begin position="1"/>
        <end position="106"/>
    </location>
</feature>
<keyword id="KW-0328">Glycosyltransferase</keyword>
<keyword id="KW-0808">Transferase</keyword>
<gene>
    <name evidence="1" type="primary">ppnP</name>
    <name type="ordered locus">Bamb_3969</name>
</gene>
<dbReference type="EC" id="2.4.2.1" evidence="1"/>
<dbReference type="EC" id="2.4.2.2" evidence="1"/>
<dbReference type="EMBL" id="CP000441">
    <property type="protein sequence ID" value="ABI89523.1"/>
    <property type="molecule type" value="Genomic_DNA"/>
</dbReference>
<dbReference type="RefSeq" id="WP_011658970.1">
    <property type="nucleotide sequence ID" value="NC_008391.1"/>
</dbReference>
<dbReference type="SMR" id="Q0B8K0"/>
<dbReference type="GeneID" id="93086945"/>
<dbReference type="KEGG" id="bam:Bamb_3969"/>
<dbReference type="PATRIC" id="fig|339670.21.peg.4245"/>
<dbReference type="eggNOG" id="COG3123">
    <property type="taxonomic scope" value="Bacteria"/>
</dbReference>
<dbReference type="Proteomes" id="UP000000662">
    <property type="component" value="Chromosome 2"/>
</dbReference>
<dbReference type="GO" id="GO:0005829">
    <property type="term" value="C:cytosol"/>
    <property type="evidence" value="ECO:0007669"/>
    <property type="project" value="TreeGrafter"/>
</dbReference>
<dbReference type="GO" id="GO:0047975">
    <property type="term" value="F:guanosine phosphorylase activity"/>
    <property type="evidence" value="ECO:0007669"/>
    <property type="project" value="UniProtKB-EC"/>
</dbReference>
<dbReference type="GO" id="GO:0004731">
    <property type="term" value="F:purine-nucleoside phosphorylase activity"/>
    <property type="evidence" value="ECO:0007669"/>
    <property type="project" value="UniProtKB-UniRule"/>
</dbReference>
<dbReference type="GO" id="GO:0009032">
    <property type="term" value="F:thymidine phosphorylase activity"/>
    <property type="evidence" value="ECO:0007669"/>
    <property type="project" value="UniProtKB-EC"/>
</dbReference>
<dbReference type="GO" id="GO:0004850">
    <property type="term" value="F:uridine phosphorylase activity"/>
    <property type="evidence" value="ECO:0007669"/>
    <property type="project" value="UniProtKB-EC"/>
</dbReference>
<dbReference type="CDD" id="cd20296">
    <property type="entry name" value="cupin_PpnP-like"/>
    <property type="match status" value="1"/>
</dbReference>
<dbReference type="Gene3D" id="2.60.120.10">
    <property type="entry name" value="Jelly Rolls"/>
    <property type="match status" value="1"/>
</dbReference>
<dbReference type="HAMAP" id="MF_01537">
    <property type="entry name" value="Nucleos_phosphorylase_PpnP"/>
    <property type="match status" value="1"/>
</dbReference>
<dbReference type="InterPro" id="IPR009664">
    <property type="entry name" value="Ppnp"/>
</dbReference>
<dbReference type="InterPro" id="IPR014710">
    <property type="entry name" value="RmlC-like_jellyroll"/>
</dbReference>
<dbReference type="InterPro" id="IPR011051">
    <property type="entry name" value="RmlC_Cupin_sf"/>
</dbReference>
<dbReference type="PANTHER" id="PTHR36540">
    <property type="entry name" value="PYRIMIDINE/PURINE NUCLEOSIDE PHOSPHORYLASE"/>
    <property type="match status" value="1"/>
</dbReference>
<dbReference type="PANTHER" id="PTHR36540:SF1">
    <property type="entry name" value="PYRIMIDINE_PURINE NUCLEOSIDE PHOSPHORYLASE"/>
    <property type="match status" value="1"/>
</dbReference>
<dbReference type="Pfam" id="PF06865">
    <property type="entry name" value="Ppnp"/>
    <property type="match status" value="1"/>
</dbReference>
<dbReference type="SUPFAM" id="SSF51182">
    <property type="entry name" value="RmlC-like cupins"/>
    <property type="match status" value="1"/>
</dbReference>
<proteinExistence type="inferred from homology"/>
<name>PPNP_BURCM</name>
<organism>
    <name type="scientific">Burkholderia ambifaria (strain ATCC BAA-244 / DSM 16087 / CCUG 44356 / LMG 19182 / AMMD)</name>
    <name type="common">Burkholderia cepacia (strain AMMD)</name>
    <dbReference type="NCBI Taxonomy" id="339670"/>
    <lineage>
        <taxon>Bacteria</taxon>
        <taxon>Pseudomonadati</taxon>
        <taxon>Pseudomonadota</taxon>
        <taxon>Betaproteobacteria</taxon>
        <taxon>Burkholderiales</taxon>
        <taxon>Burkholderiaceae</taxon>
        <taxon>Burkholderia</taxon>
        <taxon>Burkholderia cepacia complex</taxon>
    </lineage>
</organism>
<accession>Q0B8K0</accession>
<protein>
    <recommendedName>
        <fullName evidence="1">Pyrimidine/purine nucleoside phosphorylase</fullName>
        <ecNumber evidence="1">2.4.2.1</ecNumber>
        <ecNumber evidence="1">2.4.2.2</ecNumber>
    </recommendedName>
    <alternativeName>
        <fullName evidence="1">Adenosine phosphorylase</fullName>
    </alternativeName>
    <alternativeName>
        <fullName evidence="1">Cytidine phosphorylase</fullName>
    </alternativeName>
    <alternativeName>
        <fullName evidence="1">Guanosine phosphorylase</fullName>
    </alternativeName>
    <alternativeName>
        <fullName evidence="1">Inosine phosphorylase</fullName>
    </alternativeName>
    <alternativeName>
        <fullName evidence="1">Thymidine phosphorylase</fullName>
    </alternativeName>
    <alternativeName>
        <fullName evidence="1">Uridine phosphorylase</fullName>
    </alternativeName>
    <alternativeName>
        <fullName evidence="1">Xanthosine phosphorylase</fullName>
    </alternativeName>
</protein>
<evidence type="ECO:0000255" key="1">
    <source>
        <dbReference type="HAMAP-Rule" id="MF_01537"/>
    </source>
</evidence>